<comment type="function">
    <text evidence="1">Forms a proton-selective ion channel that is necessary for the efficient release of the viral genome during virus entry. After attaching to the cell surface, the virion enters the cell by endocytosis. Acidification of the endosome triggers M2 ion channel activity. The influx of protons into virion interior is believed to disrupt interactions between the viral ribonucleoprotein (RNP), matrix protein 1 (M1), and lipid bilayers, thereby freeing the viral genome from interaction with viral proteins and enabling RNA segments to migrate to the host cell nucleus, where influenza virus RNA transcription and replication occur. Also plays a role in viral proteins secretory pathway. Elevates the intravesicular pH of normally acidic compartments, such as trans-Golgi network, preventing newly formed hemagglutinin from premature switching to the fusion-active conformation.</text>
</comment>
<comment type="activity regulation">
    <text>The M2 protein from most influenza A strains is inhibited by amantadine and rimantadine, resulting in viral uncoating incapacity. Emergence of amantadine-resistant variants is usually rapid.</text>
</comment>
<comment type="subunit">
    <text evidence="1">Homotetramer; composed of two disulfide-linked dimers held together by non-covalent interactions. May interact with matrix protein 1.</text>
</comment>
<comment type="subcellular location">
    <subcellularLocation>
        <location evidence="1">Virion membrane</location>
    </subcellularLocation>
    <subcellularLocation>
        <location evidence="1">Host apical cell membrane</location>
        <topology evidence="1">Single-pass type III membrane protein</topology>
    </subcellularLocation>
    <text evidence="1">Abundantly expressed at the apical plasma membrane in infected polarized epithelial cells, in close proximity to budding and assembled virions. Minor component of virions (only 16-20 molecules/virion).</text>
</comment>
<comment type="alternative products">
    <event type="alternative splicing"/>
    <isoform>
        <id>Q0A2D6-1</id>
        <name>M2</name>
        <sequence type="displayed"/>
    </isoform>
    <isoform>
        <id>Q0A2D5-1</id>
        <name>M1</name>
        <sequence type="external"/>
    </isoform>
    <text>Only the first 9 residues are shared by the 2 isoforms.</text>
</comment>
<comment type="domain">
    <text evidence="1">Cytoplasmic tail plays an important role in virion assembly and morphogenesis.</text>
</comment>
<comment type="miscellaneous">
    <text evidence="1">When the channel is activated, one or more imidazole moieties of His-37 probably become bi-protonated.</text>
</comment>
<comment type="similarity">
    <text evidence="1">Belongs to the influenza viruses matrix protein M2 family.</text>
</comment>
<proteinExistence type="inferred from homology"/>
<accession>Q0A2D6</accession>
<organismHost>
    <name type="scientific">Aves</name>
    <dbReference type="NCBI Taxonomy" id="8782"/>
</organismHost>
<sequence>MSLLTEVETLTRNGWECKCSDSSDPLIIAASIIGILHLILWIFNRLFFKCIYRRLKYGLKRGPSTEGAPESMREEYRQEQQSAVDVDDVHFVNIELE</sequence>
<reference key="1">
    <citation type="journal article" date="2006" name="Science">
        <title>Large-scale sequence analysis of avian influenza isolates.</title>
        <authorList>
            <person name="Obenauer J.C."/>
            <person name="Denson J."/>
            <person name="Mehta P.K."/>
            <person name="Su X."/>
            <person name="Mukatira S."/>
            <person name="Finkelstein D.B."/>
            <person name="Xu X."/>
            <person name="Wang J."/>
            <person name="Ma J."/>
            <person name="Fan Y."/>
            <person name="Rakestraw K.M."/>
            <person name="Webster R.G."/>
            <person name="Hoffmann E."/>
            <person name="Krauss S."/>
            <person name="Zheng J."/>
            <person name="Zhang Z."/>
            <person name="Naeve C.W."/>
        </authorList>
    </citation>
    <scope>NUCLEOTIDE SEQUENCE [GENOMIC RNA]</scope>
</reference>
<feature type="chain" id="PRO_0000326380" description="Matrix protein 2">
    <location>
        <begin position="1"/>
        <end position="97"/>
    </location>
</feature>
<feature type="topological domain" description="Virion surface" evidence="1">
    <location>
        <begin position="1"/>
        <end position="22"/>
    </location>
</feature>
<feature type="transmembrane region" description="Helical; Signal-anchor for type III membrane protein" evidence="1">
    <location>
        <begin position="23"/>
        <end position="43"/>
    </location>
</feature>
<feature type="topological domain" description="Intravirion" evidence="1">
    <location>
        <begin position="44"/>
        <end position="97"/>
    </location>
</feature>
<feature type="region of interest" description="Disordered" evidence="2">
    <location>
        <begin position="60"/>
        <end position="83"/>
    </location>
</feature>
<feature type="site" description="Essential for channel activity, possibly by being protonated during channel activation, and by forming the channel gate and the selective filter" evidence="1">
    <location>
        <position position="37"/>
    </location>
</feature>
<feature type="site" description="Seems to be involved in pH gating" evidence="1">
    <location>
        <position position="41"/>
    </location>
</feature>
<feature type="modified residue" description="Phosphoserine; by host" evidence="1">
    <location>
        <position position="64"/>
    </location>
</feature>
<feature type="modified residue" description="Phosphoserine; by host" evidence="1">
    <location>
        <position position="82"/>
    </location>
</feature>
<feature type="lipid moiety-binding region" description="S-palmitoyl cysteine; by host" evidence="1">
    <location>
        <position position="50"/>
    </location>
</feature>
<feature type="disulfide bond" description="Interchain (with C-17)" evidence="1">
    <location>
        <position position="17"/>
    </location>
</feature>
<feature type="disulfide bond" description="Interchain (with C-19)" evidence="1">
    <location>
        <position position="19"/>
    </location>
</feature>
<organism>
    <name type="scientific">Influenza A virus (strain A/Chicken/Pennsylvania/1370/1983 H5N2)</name>
    <dbReference type="NCBI Taxonomy" id="385617"/>
    <lineage>
        <taxon>Viruses</taxon>
        <taxon>Riboviria</taxon>
        <taxon>Orthornavirae</taxon>
        <taxon>Negarnaviricota</taxon>
        <taxon>Polyploviricotina</taxon>
        <taxon>Insthoviricetes</taxon>
        <taxon>Articulavirales</taxon>
        <taxon>Orthomyxoviridae</taxon>
        <taxon>Alphainfluenzavirus</taxon>
        <taxon>Alphainfluenzavirus influenzae</taxon>
        <taxon>Influenza A virus</taxon>
    </lineage>
</organism>
<gene>
    <name evidence="1" type="primary">M</name>
</gene>
<protein>
    <recommendedName>
        <fullName evidence="1">Matrix protein 2</fullName>
    </recommendedName>
    <alternativeName>
        <fullName evidence="1">Proton channel protein M2</fullName>
    </alternativeName>
</protein>
<keyword id="KW-0025">Alternative splicing</keyword>
<keyword id="KW-1015">Disulfide bond</keyword>
<keyword id="KW-1032">Host cell membrane</keyword>
<keyword id="KW-1043">Host membrane</keyword>
<keyword id="KW-0945">Host-virus interaction</keyword>
<keyword id="KW-0375">Hydrogen ion transport</keyword>
<keyword id="KW-1083">Inhibition of host autophagy by virus</keyword>
<keyword id="KW-0407">Ion channel</keyword>
<keyword id="KW-0406">Ion transport</keyword>
<keyword id="KW-0449">Lipoprotein</keyword>
<keyword id="KW-0472">Membrane</keyword>
<keyword id="KW-0564">Palmitate</keyword>
<keyword id="KW-0597">Phosphoprotein</keyword>
<keyword id="KW-0735">Signal-anchor</keyword>
<keyword id="KW-0812">Transmembrane</keyword>
<keyword id="KW-1133">Transmembrane helix</keyword>
<keyword id="KW-0813">Transport</keyword>
<keyword id="KW-1182">Viral ion channel</keyword>
<keyword id="KW-0946">Virion</keyword>
<name>M2_I83A6</name>
<dbReference type="EMBL" id="CY015109">
    <property type="protein sequence ID" value="ABI85147.1"/>
    <property type="molecule type" value="Genomic_RNA"/>
</dbReference>
<dbReference type="SMR" id="Q0A2D6"/>
<dbReference type="Proteomes" id="UP000105783">
    <property type="component" value="Genome"/>
</dbReference>
<dbReference type="GO" id="GO:0020002">
    <property type="term" value="C:host cell plasma membrane"/>
    <property type="evidence" value="ECO:0007669"/>
    <property type="project" value="UniProtKB-SubCell"/>
</dbReference>
<dbReference type="GO" id="GO:0016020">
    <property type="term" value="C:membrane"/>
    <property type="evidence" value="ECO:0007669"/>
    <property type="project" value="UniProtKB-UniRule"/>
</dbReference>
<dbReference type="GO" id="GO:0055036">
    <property type="term" value="C:virion membrane"/>
    <property type="evidence" value="ECO:0007669"/>
    <property type="project" value="UniProtKB-SubCell"/>
</dbReference>
<dbReference type="GO" id="GO:0005216">
    <property type="term" value="F:monoatomic ion channel activity"/>
    <property type="evidence" value="ECO:0007669"/>
    <property type="project" value="UniProtKB-UniRule"/>
</dbReference>
<dbReference type="GO" id="GO:0015078">
    <property type="term" value="F:proton transmembrane transporter activity"/>
    <property type="evidence" value="ECO:0007669"/>
    <property type="project" value="UniProtKB-UniRule"/>
</dbReference>
<dbReference type="GO" id="GO:0051259">
    <property type="term" value="P:protein complex oligomerization"/>
    <property type="evidence" value="ECO:0007669"/>
    <property type="project" value="UniProtKB-UniRule"/>
</dbReference>
<dbReference type="GO" id="GO:0044694">
    <property type="term" value="P:symbiont genome entry into host cell via pore formation in plasma membrane"/>
    <property type="evidence" value="ECO:0007669"/>
    <property type="project" value="UniProtKB-UniRule"/>
</dbReference>
<dbReference type="GO" id="GO:0140321">
    <property type="term" value="P:symbiont-mediated suppression of host autophagy"/>
    <property type="evidence" value="ECO:0007669"/>
    <property type="project" value="UniProtKB-KW"/>
</dbReference>
<dbReference type="Gene3D" id="6.10.250.1640">
    <property type="match status" value="1"/>
</dbReference>
<dbReference type="HAMAP" id="MF_04069">
    <property type="entry name" value="INFV_M2"/>
    <property type="match status" value="1"/>
</dbReference>
<dbReference type="InterPro" id="IPR002089">
    <property type="entry name" value="Flu_M2"/>
</dbReference>
<dbReference type="Pfam" id="PF00599">
    <property type="entry name" value="Flu_M2"/>
    <property type="match status" value="1"/>
</dbReference>
<evidence type="ECO:0000255" key="1">
    <source>
        <dbReference type="HAMAP-Rule" id="MF_04069"/>
    </source>
</evidence>
<evidence type="ECO:0000256" key="2">
    <source>
        <dbReference type="SAM" id="MobiDB-lite"/>
    </source>
</evidence>